<organism>
    <name type="scientific">Methanococcus maripaludis (strain DSM 14266 / JCM 13030 / NBRC 101832 / S2 / LL)</name>
    <dbReference type="NCBI Taxonomy" id="267377"/>
    <lineage>
        <taxon>Archaea</taxon>
        <taxon>Methanobacteriati</taxon>
        <taxon>Methanobacteriota</taxon>
        <taxon>Methanomada group</taxon>
        <taxon>Methanococci</taxon>
        <taxon>Methanococcales</taxon>
        <taxon>Methanococcaceae</taxon>
        <taxon>Methanococcus</taxon>
    </lineage>
</organism>
<reference key="1">
    <citation type="journal article" date="2004" name="J. Bacteriol.">
        <title>Complete genome sequence of the genetically tractable hydrogenotrophic methanogen Methanococcus maripaludis.</title>
        <authorList>
            <person name="Hendrickson E.L."/>
            <person name="Kaul R."/>
            <person name="Zhou Y."/>
            <person name="Bovee D."/>
            <person name="Chapman P."/>
            <person name="Chung J."/>
            <person name="Conway de Macario E."/>
            <person name="Dodsworth J.A."/>
            <person name="Gillett W."/>
            <person name="Graham D.E."/>
            <person name="Hackett M."/>
            <person name="Haydock A.K."/>
            <person name="Kang A."/>
            <person name="Land M.L."/>
            <person name="Levy R."/>
            <person name="Lie T.J."/>
            <person name="Major T.A."/>
            <person name="Moore B.C."/>
            <person name="Porat I."/>
            <person name="Palmeiri A."/>
            <person name="Rouse G."/>
            <person name="Saenphimmachak C."/>
            <person name="Soell D."/>
            <person name="Van Dien S."/>
            <person name="Wang T."/>
            <person name="Whitman W.B."/>
            <person name="Xia Q."/>
            <person name="Zhang Y."/>
            <person name="Larimer F.W."/>
            <person name="Olson M.V."/>
            <person name="Leigh J.A."/>
        </authorList>
    </citation>
    <scope>NUCLEOTIDE SEQUENCE [LARGE SCALE GENOMIC DNA]</scope>
    <source>
        <strain>DSM 14266 / JCM 13030 / NBRC 101832 / S2 / LL</strain>
    </source>
</reference>
<sequence>MDDSFDIYEIKARQVLDSRGNPTVEAEVLTAGGGYGHTIVPSGASTGTFEAVELRDKKEKYGGKSVLNAVSNVNDIIAQELIGEDARNQRLIDQIMLNLDGTENKGNLGANAILAVSLAVAKAAADTASLPLYKYIGGSNAYVMPAPMMNVLNGGQHAGNALDFQEFMIMPVGADSFAEAVRMCSETYQSLKKVVAEKYGKDAVNVGDEGGFAPPVKTIDEALAVLLEGVKKAGYEDEIVFTIDSAASEFYDEKSGSYMIAGEKVSTDKLIDIYKEMVEQYPIVSIEDPLFEEDFEGFKTATKELKGIQIVGDDLFVTNTKRLKKGIEMGAANSLLLKVNQIGTLSESIDAANMAFRNGYSLVVSHRSGESEDSTIADLAVALNAGQIKTGAPARGERTAKYNQLMRIEEELQISKYAGKDFKIPF</sequence>
<name>ENO_METMP</name>
<evidence type="ECO:0000255" key="1">
    <source>
        <dbReference type="HAMAP-Rule" id="MF_00318"/>
    </source>
</evidence>
<evidence type="ECO:0000305" key="2"/>
<proteinExistence type="inferred from homology"/>
<gene>
    <name evidence="1" type="primary">eno</name>
    <name type="ordered locus">MMP0396</name>
</gene>
<dbReference type="EC" id="4.2.1.11" evidence="1"/>
<dbReference type="EMBL" id="BX950229">
    <property type="protein sequence ID" value="CAF29952.1"/>
    <property type="status" value="ALT_INIT"/>
    <property type="molecule type" value="Genomic_DNA"/>
</dbReference>
<dbReference type="SMR" id="Q6M075"/>
<dbReference type="STRING" id="267377.MMP0396"/>
<dbReference type="EnsemblBacteria" id="CAF29952">
    <property type="protein sequence ID" value="CAF29952"/>
    <property type="gene ID" value="MMP0396"/>
</dbReference>
<dbReference type="KEGG" id="mmp:MMP0396"/>
<dbReference type="PATRIC" id="fig|267377.15.peg.400"/>
<dbReference type="eggNOG" id="arCOG01169">
    <property type="taxonomic scope" value="Archaea"/>
</dbReference>
<dbReference type="HOGENOM" id="CLU_031223_2_1_2"/>
<dbReference type="UniPathway" id="UPA00109">
    <property type="reaction ID" value="UER00187"/>
</dbReference>
<dbReference type="Proteomes" id="UP000000590">
    <property type="component" value="Chromosome"/>
</dbReference>
<dbReference type="GO" id="GO:0009986">
    <property type="term" value="C:cell surface"/>
    <property type="evidence" value="ECO:0007669"/>
    <property type="project" value="UniProtKB-SubCell"/>
</dbReference>
<dbReference type="GO" id="GO:0005576">
    <property type="term" value="C:extracellular region"/>
    <property type="evidence" value="ECO:0007669"/>
    <property type="project" value="UniProtKB-SubCell"/>
</dbReference>
<dbReference type="GO" id="GO:0000015">
    <property type="term" value="C:phosphopyruvate hydratase complex"/>
    <property type="evidence" value="ECO:0007669"/>
    <property type="project" value="InterPro"/>
</dbReference>
<dbReference type="GO" id="GO:0000287">
    <property type="term" value="F:magnesium ion binding"/>
    <property type="evidence" value="ECO:0007669"/>
    <property type="project" value="UniProtKB-UniRule"/>
</dbReference>
<dbReference type="GO" id="GO:0004634">
    <property type="term" value="F:phosphopyruvate hydratase activity"/>
    <property type="evidence" value="ECO:0007669"/>
    <property type="project" value="UniProtKB-UniRule"/>
</dbReference>
<dbReference type="GO" id="GO:0006096">
    <property type="term" value="P:glycolytic process"/>
    <property type="evidence" value="ECO:0007669"/>
    <property type="project" value="UniProtKB-UniRule"/>
</dbReference>
<dbReference type="CDD" id="cd03313">
    <property type="entry name" value="enolase"/>
    <property type="match status" value="1"/>
</dbReference>
<dbReference type="FunFam" id="3.30.390.10:FF:000001">
    <property type="entry name" value="Enolase"/>
    <property type="match status" value="1"/>
</dbReference>
<dbReference type="Gene3D" id="3.20.20.120">
    <property type="entry name" value="Enolase-like C-terminal domain"/>
    <property type="match status" value="1"/>
</dbReference>
<dbReference type="Gene3D" id="3.30.390.10">
    <property type="entry name" value="Enolase-like, N-terminal domain"/>
    <property type="match status" value="1"/>
</dbReference>
<dbReference type="HAMAP" id="MF_00318">
    <property type="entry name" value="Enolase"/>
    <property type="match status" value="1"/>
</dbReference>
<dbReference type="InterPro" id="IPR000941">
    <property type="entry name" value="Enolase"/>
</dbReference>
<dbReference type="InterPro" id="IPR036849">
    <property type="entry name" value="Enolase-like_C_sf"/>
</dbReference>
<dbReference type="InterPro" id="IPR029017">
    <property type="entry name" value="Enolase-like_N"/>
</dbReference>
<dbReference type="InterPro" id="IPR020810">
    <property type="entry name" value="Enolase_C"/>
</dbReference>
<dbReference type="InterPro" id="IPR020809">
    <property type="entry name" value="Enolase_CS"/>
</dbReference>
<dbReference type="InterPro" id="IPR020811">
    <property type="entry name" value="Enolase_N"/>
</dbReference>
<dbReference type="NCBIfam" id="TIGR01060">
    <property type="entry name" value="eno"/>
    <property type="match status" value="1"/>
</dbReference>
<dbReference type="PANTHER" id="PTHR11902">
    <property type="entry name" value="ENOLASE"/>
    <property type="match status" value="1"/>
</dbReference>
<dbReference type="PANTHER" id="PTHR11902:SF1">
    <property type="entry name" value="ENOLASE"/>
    <property type="match status" value="1"/>
</dbReference>
<dbReference type="Pfam" id="PF00113">
    <property type="entry name" value="Enolase_C"/>
    <property type="match status" value="1"/>
</dbReference>
<dbReference type="Pfam" id="PF03952">
    <property type="entry name" value="Enolase_N"/>
    <property type="match status" value="1"/>
</dbReference>
<dbReference type="PIRSF" id="PIRSF001400">
    <property type="entry name" value="Enolase"/>
    <property type="match status" value="1"/>
</dbReference>
<dbReference type="PRINTS" id="PR00148">
    <property type="entry name" value="ENOLASE"/>
</dbReference>
<dbReference type="SFLD" id="SFLDS00001">
    <property type="entry name" value="Enolase"/>
    <property type="match status" value="1"/>
</dbReference>
<dbReference type="SFLD" id="SFLDF00002">
    <property type="entry name" value="enolase"/>
    <property type="match status" value="1"/>
</dbReference>
<dbReference type="SMART" id="SM01192">
    <property type="entry name" value="Enolase_C"/>
    <property type="match status" value="1"/>
</dbReference>
<dbReference type="SMART" id="SM01193">
    <property type="entry name" value="Enolase_N"/>
    <property type="match status" value="1"/>
</dbReference>
<dbReference type="SUPFAM" id="SSF51604">
    <property type="entry name" value="Enolase C-terminal domain-like"/>
    <property type="match status" value="1"/>
</dbReference>
<dbReference type="SUPFAM" id="SSF54826">
    <property type="entry name" value="Enolase N-terminal domain-like"/>
    <property type="match status" value="1"/>
</dbReference>
<dbReference type="PROSITE" id="PS00164">
    <property type="entry name" value="ENOLASE"/>
    <property type="match status" value="1"/>
</dbReference>
<keyword id="KW-0963">Cytoplasm</keyword>
<keyword id="KW-0324">Glycolysis</keyword>
<keyword id="KW-0456">Lyase</keyword>
<keyword id="KW-0460">Magnesium</keyword>
<keyword id="KW-0479">Metal-binding</keyword>
<keyword id="KW-1185">Reference proteome</keyword>
<keyword id="KW-0964">Secreted</keyword>
<accession>Q6M075</accession>
<feature type="chain" id="PRO_0000134027" description="Enolase">
    <location>
        <begin position="1"/>
        <end position="426"/>
    </location>
</feature>
<feature type="active site" description="Proton donor" evidence="1">
    <location>
        <position position="209"/>
    </location>
</feature>
<feature type="active site" description="Proton acceptor" evidence="1">
    <location>
        <position position="338"/>
    </location>
</feature>
<feature type="binding site" evidence="1">
    <location>
        <position position="165"/>
    </location>
    <ligand>
        <name>(2R)-2-phosphoglycerate</name>
        <dbReference type="ChEBI" id="CHEBI:58289"/>
    </ligand>
</feature>
<feature type="binding site" evidence="1">
    <location>
        <position position="244"/>
    </location>
    <ligand>
        <name>Mg(2+)</name>
        <dbReference type="ChEBI" id="CHEBI:18420"/>
    </ligand>
</feature>
<feature type="binding site" evidence="1">
    <location>
        <position position="287"/>
    </location>
    <ligand>
        <name>Mg(2+)</name>
        <dbReference type="ChEBI" id="CHEBI:18420"/>
    </ligand>
</feature>
<feature type="binding site" evidence="1">
    <location>
        <position position="313"/>
    </location>
    <ligand>
        <name>Mg(2+)</name>
        <dbReference type="ChEBI" id="CHEBI:18420"/>
    </ligand>
</feature>
<feature type="binding site" evidence="1">
    <location>
        <position position="338"/>
    </location>
    <ligand>
        <name>(2R)-2-phosphoglycerate</name>
        <dbReference type="ChEBI" id="CHEBI:58289"/>
    </ligand>
</feature>
<feature type="binding site" evidence="1">
    <location>
        <position position="367"/>
    </location>
    <ligand>
        <name>(2R)-2-phosphoglycerate</name>
        <dbReference type="ChEBI" id="CHEBI:58289"/>
    </ligand>
</feature>
<feature type="binding site" evidence="1">
    <location>
        <position position="368"/>
    </location>
    <ligand>
        <name>(2R)-2-phosphoglycerate</name>
        <dbReference type="ChEBI" id="CHEBI:58289"/>
    </ligand>
</feature>
<feature type="binding site" evidence="1">
    <location>
        <position position="389"/>
    </location>
    <ligand>
        <name>(2R)-2-phosphoglycerate</name>
        <dbReference type="ChEBI" id="CHEBI:58289"/>
    </ligand>
</feature>
<comment type="function">
    <text evidence="1">Catalyzes the reversible conversion of 2-phosphoglycerate (2-PG) into phosphoenolpyruvate (PEP). It is essential for the degradation of carbohydrates via glycolysis.</text>
</comment>
<comment type="catalytic activity">
    <reaction evidence="1">
        <text>(2R)-2-phosphoglycerate = phosphoenolpyruvate + H2O</text>
        <dbReference type="Rhea" id="RHEA:10164"/>
        <dbReference type="ChEBI" id="CHEBI:15377"/>
        <dbReference type="ChEBI" id="CHEBI:58289"/>
        <dbReference type="ChEBI" id="CHEBI:58702"/>
        <dbReference type="EC" id="4.2.1.11"/>
    </reaction>
</comment>
<comment type="cofactor">
    <cofactor evidence="1">
        <name>Mg(2+)</name>
        <dbReference type="ChEBI" id="CHEBI:18420"/>
    </cofactor>
    <text evidence="1">Binds a second Mg(2+) ion via substrate during catalysis.</text>
</comment>
<comment type="pathway">
    <text evidence="1">Carbohydrate degradation; glycolysis; pyruvate from D-glyceraldehyde 3-phosphate: step 4/5.</text>
</comment>
<comment type="subcellular location">
    <subcellularLocation>
        <location evidence="1">Cytoplasm</location>
    </subcellularLocation>
    <subcellularLocation>
        <location evidence="1">Secreted</location>
    </subcellularLocation>
    <subcellularLocation>
        <location evidence="1">Cell surface</location>
    </subcellularLocation>
    <text evidence="1">Fractions of enolase are present in both the cytoplasm and on the cell surface.</text>
</comment>
<comment type="similarity">
    <text evidence="1">Belongs to the enolase family.</text>
</comment>
<comment type="sequence caution" evidence="2">
    <conflict type="erroneous initiation">
        <sequence resource="EMBL-CDS" id="CAF29952"/>
    </conflict>
    <text>Extended N-terminus.</text>
</comment>
<protein>
    <recommendedName>
        <fullName evidence="1">Enolase</fullName>
        <ecNumber evidence="1">4.2.1.11</ecNumber>
    </recommendedName>
    <alternativeName>
        <fullName evidence="1">2-phospho-D-glycerate hydro-lyase</fullName>
    </alternativeName>
    <alternativeName>
        <fullName evidence="1">2-phosphoglycerate dehydratase</fullName>
    </alternativeName>
</protein>